<reference key="1">
    <citation type="journal article" date="2003" name="Proc. Natl. Acad. Sci. U.S.A.">
        <title>The complete genome sequence of Mycobacterium bovis.</title>
        <authorList>
            <person name="Garnier T."/>
            <person name="Eiglmeier K."/>
            <person name="Camus J.-C."/>
            <person name="Medina N."/>
            <person name="Mansoor H."/>
            <person name="Pryor M."/>
            <person name="Duthoy S."/>
            <person name="Grondin S."/>
            <person name="Lacroix C."/>
            <person name="Monsempe C."/>
            <person name="Simon S."/>
            <person name="Harris B."/>
            <person name="Atkin R."/>
            <person name="Doggett J."/>
            <person name="Mayes R."/>
            <person name="Keating L."/>
            <person name="Wheeler P.R."/>
            <person name="Parkhill J."/>
            <person name="Barrell B.G."/>
            <person name="Cole S.T."/>
            <person name="Gordon S.V."/>
            <person name="Hewinson R.G."/>
        </authorList>
    </citation>
    <scope>NUCLEOTIDE SEQUENCE [LARGE SCALE GENOMIC DNA]</scope>
    <source>
        <strain>ATCC BAA-935 / AF2122/97</strain>
    </source>
</reference>
<reference key="2">
    <citation type="journal article" date="2017" name="Genome Announc.">
        <title>Updated reference genome sequence and annotation of Mycobacterium bovis AF2122/97.</title>
        <authorList>
            <person name="Malone K.M."/>
            <person name="Farrell D."/>
            <person name="Stuber T.P."/>
            <person name="Schubert O.T."/>
            <person name="Aebersold R."/>
            <person name="Robbe-Austerman S."/>
            <person name="Gordon S.V."/>
        </authorList>
    </citation>
    <scope>NUCLEOTIDE SEQUENCE [LARGE SCALE GENOMIC DNA]</scope>
    <scope>GENOME REANNOTATION</scope>
    <source>
        <strain>ATCC BAA-935 / AF2122/97</strain>
    </source>
</reference>
<gene>
    <name type="ordered locus">BQ2027_MB1452</name>
</gene>
<name>Y1452_MYCBO</name>
<sequence>MTAAPNDWDVVLRPHWTPLFAYAAAFLIAVAHVAGGLLLKVGSSGVVFQTADQVAMGALGLVLAGAVLLFARPRLRVGSAGLSVRNLLGDRIVGWSEVIGVSFPGGSRWARIDLADDEYIPVMAIQAVDKDRAVAAMDTVRSLLARYRPDLCAR</sequence>
<accession>P64848</accession>
<accession>A0A1R3XYA5</accession>
<accession>P71686</accession>
<accession>X2BI99</accession>
<protein>
    <recommendedName>
        <fullName>Uncharacterized protein Mb1452</fullName>
    </recommendedName>
</protein>
<dbReference type="EMBL" id="LT708304">
    <property type="protein sequence ID" value="SIU00055.1"/>
    <property type="molecule type" value="Genomic_DNA"/>
</dbReference>
<dbReference type="RefSeq" id="NP_855104.1">
    <property type="nucleotide sequence ID" value="NC_002945.3"/>
</dbReference>
<dbReference type="RefSeq" id="WP_003407340.1">
    <property type="nucleotide sequence ID" value="NC_002945.4"/>
</dbReference>
<dbReference type="KEGG" id="mbo:BQ2027_MB1452"/>
<dbReference type="PATRIC" id="fig|233413.5.peg.1587"/>
<dbReference type="Proteomes" id="UP000001419">
    <property type="component" value="Chromosome"/>
</dbReference>
<dbReference type="GO" id="GO:0005886">
    <property type="term" value="C:plasma membrane"/>
    <property type="evidence" value="ECO:0007669"/>
    <property type="project" value="UniProtKB-SubCell"/>
</dbReference>
<dbReference type="InterPro" id="IPR019692">
    <property type="entry name" value="CFP-6_PH"/>
</dbReference>
<dbReference type="Pfam" id="PF10756">
    <property type="entry name" value="bPH_6"/>
    <property type="match status" value="1"/>
</dbReference>
<feature type="chain" id="PRO_0000103844" description="Uncharacterized protein Mb1452">
    <location>
        <begin position="1"/>
        <end position="154"/>
    </location>
</feature>
<feature type="transmembrane region" description="Helical" evidence="1">
    <location>
        <begin position="19"/>
        <end position="39"/>
    </location>
</feature>
<feature type="transmembrane region" description="Helical" evidence="1">
    <location>
        <begin position="51"/>
        <end position="71"/>
    </location>
</feature>
<organism>
    <name type="scientific">Mycobacterium bovis (strain ATCC BAA-935 / AF2122/97)</name>
    <dbReference type="NCBI Taxonomy" id="233413"/>
    <lineage>
        <taxon>Bacteria</taxon>
        <taxon>Bacillati</taxon>
        <taxon>Actinomycetota</taxon>
        <taxon>Actinomycetes</taxon>
        <taxon>Mycobacteriales</taxon>
        <taxon>Mycobacteriaceae</taxon>
        <taxon>Mycobacterium</taxon>
        <taxon>Mycobacterium tuberculosis complex</taxon>
    </lineage>
</organism>
<comment type="subcellular location">
    <subcellularLocation>
        <location evidence="2">Cell membrane</location>
        <topology evidence="2">Multi-pass membrane protein</topology>
    </subcellularLocation>
</comment>
<proteinExistence type="predicted"/>
<keyword id="KW-1003">Cell membrane</keyword>
<keyword id="KW-0472">Membrane</keyword>
<keyword id="KW-1185">Reference proteome</keyword>
<keyword id="KW-0812">Transmembrane</keyword>
<keyword id="KW-1133">Transmembrane helix</keyword>
<evidence type="ECO:0000255" key="1"/>
<evidence type="ECO:0000305" key="2"/>